<name>STHC_PHANO</name>
<reference key="1">
    <citation type="journal article" date="2007" name="Plant Cell">
        <title>Dothideomycete-plant interactions illuminated by genome sequencing and EST analysis of the wheat pathogen Stagonospora nodorum.</title>
        <authorList>
            <person name="Hane J.K."/>
            <person name="Lowe R.G.T."/>
            <person name="Solomon P.S."/>
            <person name="Tan K.-C."/>
            <person name="Schoch C.L."/>
            <person name="Spatafora J.W."/>
            <person name="Crous P.W."/>
            <person name="Kodira C.D."/>
            <person name="Birren B.W."/>
            <person name="Galagan J.E."/>
            <person name="Torriani S.F.F."/>
            <person name="McDonald B.A."/>
            <person name="Oliver R.P."/>
        </authorList>
    </citation>
    <scope>NUCLEOTIDE SEQUENCE [LARGE SCALE GENOMIC DNA]</scope>
    <source>
        <strain>SN15 / ATCC MYA-4574 / FGSC 10173</strain>
    </source>
</reference>
<reference key="2">
    <citation type="journal article" date="2019" name="Chemistry">
        <title>Biosynthesis of a Tricyclo[6.2.2.02,7]dodecane System by a Berberine Bridge Enzyme-like Intramolecular Aldolase.</title>
        <authorList>
            <person name="Li H."/>
            <person name="Hu J."/>
            <person name="Wei H."/>
            <person name="Solomon P.S."/>
            <person name="Stubbs K.A."/>
            <person name="Chooi Y.H."/>
        </authorList>
    </citation>
    <scope>FUNCTION</scope>
    <scope>CATALYTIC ACTIVITY</scope>
    <scope>PATHWAY</scope>
</reference>
<proteinExistence type="evidence at protein level"/>
<organism>
    <name type="scientific">Phaeosphaeria nodorum (strain SN15 / ATCC MYA-4574 / FGSC 10173)</name>
    <name type="common">Glume blotch fungus</name>
    <name type="synonym">Parastagonospora nodorum</name>
    <dbReference type="NCBI Taxonomy" id="321614"/>
    <lineage>
        <taxon>Eukaryota</taxon>
        <taxon>Fungi</taxon>
        <taxon>Dikarya</taxon>
        <taxon>Ascomycota</taxon>
        <taxon>Pezizomycotina</taxon>
        <taxon>Dothideomycetes</taxon>
        <taxon>Pleosporomycetidae</taxon>
        <taxon>Pleosporales</taxon>
        <taxon>Pleosporineae</taxon>
        <taxon>Phaeosphaeriaceae</taxon>
        <taxon>Parastagonospora</taxon>
    </lineage>
</organism>
<accession>Q0UK52</accession>
<comment type="function">
    <text evidence="5">Short-chain dehydrogenase/reductase; part of the gene cluster that mediates the biosynthesis of the phytotoxin stemphyloxin II (PubMed:31553484). The first step of the pathway is the synthesis of dehydroprobetaenone I by the polyketide synthase sthA and the enoyl reductase sthE via condensation of one acetyl-CoA starter unit with 7 malonyl-CoA units and 5 methylations (PubMed:31553484). The C-terminal reductase (R) domain of sthA catalyzes the reductive release of the polyketide chain (PubMed:31553484). Because sthA lacks a designated enoylreductase (ER) domain, the required activity is provided the enoyl reductase sthE (PubMed:31553484). The short-chain dehydrogenase/reductase sthC then catalyzes reduction of dehydroprobetaenone I to probetaenone I (PubMed:31553484). The cytochrome P450 monooxygenase sthF catalyzes successive epoxidation, oxidation (resulting from epoxide opening) and hydroxylation to install a tertiary alcohol in the decaline ring to yield betaenone C from dehydroprobetaenone I and betaenone B from probetaenone I (PubMed:31553484). The FAD-linked oxidoreductase sthB is responsible for the conversion of betaenone C to betaenone A via an intramolecular aldol reaction between C-1 and C-17 to form the bridged tricyclic system in betaenone A (PubMed:31553484). Finally, the cytochrome P450 monooxygenase sthD catalyzes the hydroxylation of C-15 to afford the final metabolite stemphyloxin II (PubMed:31553484).</text>
</comment>
<comment type="catalytic activity">
    <reaction evidence="5">
        <text>dehydroprobetaenone I + AH2 = probetaenone I + A</text>
        <dbReference type="Rhea" id="RHEA:61864"/>
        <dbReference type="ChEBI" id="CHEBI:13193"/>
        <dbReference type="ChEBI" id="CHEBI:17499"/>
        <dbReference type="ChEBI" id="CHEBI:145061"/>
        <dbReference type="ChEBI" id="CHEBI:145062"/>
    </reaction>
    <physiologicalReaction direction="left-to-right" evidence="5">
        <dbReference type="Rhea" id="RHEA:61865"/>
    </physiologicalReaction>
</comment>
<comment type="catalytic activity">
    <reaction evidence="5">
        <text>betaenone C + AH2 = betaenone B + A</text>
        <dbReference type="Rhea" id="RHEA:61900"/>
        <dbReference type="ChEBI" id="CHEBI:13193"/>
        <dbReference type="ChEBI" id="CHEBI:17499"/>
        <dbReference type="ChEBI" id="CHEBI:145053"/>
        <dbReference type="ChEBI" id="CHEBI:145054"/>
    </reaction>
    <physiologicalReaction direction="left-to-right" evidence="5">
        <dbReference type="Rhea" id="RHEA:61901"/>
    </physiologicalReaction>
</comment>
<comment type="pathway">
    <text evidence="5">Mycotoxin biosynthesis.</text>
</comment>
<comment type="similarity">
    <text evidence="7">Belongs to the short-chain dehydrogenases/reductases (SDR) family.</text>
</comment>
<protein>
    <recommendedName>
        <fullName evidence="6">Short-chain dehydrogenase/reductase sthC</fullName>
        <ecNumber evidence="8">1.1.1.-</ecNumber>
    </recommendedName>
    <alternativeName>
        <fullName evidence="6">Stemphyloxin II biosynthesis cluster protein C</fullName>
    </alternativeName>
</protein>
<dbReference type="EC" id="1.1.1.-" evidence="8"/>
<dbReference type="EMBL" id="CH445335">
    <property type="protein sequence ID" value="EAT85328.2"/>
    <property type="molecule type" value="Genomic_DNA"/>
</dbReference>
<dbReference type="RefSeq" id="XP_001798189.1">
    <property type="nucleotide sequence ID" value="XM_001798137.1"/>
</dbReference>
<dbReference type="SMR" id="Q0UK52"/>
<dbReference type="STRING" id="321614.Q0UK52"/>
<dbReference type="EnsemblFungi" id="SNOT_07862">
    <property type="protein sequence ID" value="SNOT_07862"/>
    <property type="gene ID" value="SNOG_07862"/>
</dbReference>
<dbReference type="GeneID" id="5975082"/>
<dbReference type="KEGG" id="pno:SNOG_07862"/>
<dbReference type="VEuPathDB" id="FungiDB:JI435_078620"/>
<dbReference type="eggNOG" id="KOG1208">
    <property type="taxonomic scope" value="Eukaryota"/>
</dbReference>
<dbReference type="HOGENOM" id="CLU_010194_44_6_1"/>
<dbReference type="InParanoid" id="Q0UK52"/>
<dbReference type="Proteomes" id="UP000001055">
    <property type="component" value="Unassembled WGS sequence"/>
</dbReference>
<dbReference type="GO" id="GO:0016491">
    <property type="term" value="F:oxidoreductase activity"/>
    <property type="evidence" value="ECO:0007669"/>
    <property type="project" value="UniProtKB-KW"/>
</dbReference>
<dbReference type="Gene3D" id="3.40.50.720">
    <property type="entry name" value="NAD(P)-binding Rossmann-like Domain"/>
    <property type="match status" value="1"/>
</dbReference>
<dbReference type="InterPro" id="IPR036291">
    <property type="entry name" value="NAD(P)-bd_dom_sf"/>
</dbReference>
<dbReference type="InterPro" id="IPR002347">
    <property type="entry name" value="SDR_fam"/>
</dbReference>
<dbReference type="PANTHER" id="PTHR24320">
    <property type="entry name" value="RETINOL DEHYDROGENASE"/>
    <property type="match status" value="1"/>
</dbReference>
<dbReference type="PANTHER" id="PTHR24320:SF236">
    <property type="entry name" value="SHORT-CHAIN DEHYDROGENASE-RELATED"/>
    <property type="match status" value="1"/>
</dbReference>
<dbReference type="Pfam" id="PF00106">
    <property type="entry name" value="adh_short"/>
    <property type="match status" value="1"/>
</dbReference>
<dbReference type="PRINTS" id="PR00081">
    <property type="entry name" value="GDHRDH"/>
</dbReference>
<dbReference type="SUPFAM" id="SSF51735">
    <property type="entry name" value="NAD(P)-binding Rossmann-fold domains"/>
    <property type="match status" value="1"/>
</dbReference>
<sequence length="314" mass="34055">MAPAETTGNVQRPEAGKQSMGSFWTQMFPPKPTYTEEQVPDLTGKIFIVTGSSSGVGKEAARMLYAKNAKVYMAARPGPKLPAAINSVQEAVPKSGGALIPLELDLADLAVVKKAVEKFTSLETKLHGLINNAAVQALKDTDGDARTAQGHEIHMGVNVLAPFLFTRLLTGVLTATARQEPPGTVRVVWVSSMGTETIGEKRRGLSPDYVDYWPLMSPLERYGLSKAGNWLHGVEFARRYAADGIASFPINPGHLKSDLYREGGALFKFALKPVLYPPTYGAYVELFAALSPTLTLKDSGAWSKYVEMVYFPDC</sequence>
<keyword id="KW-0521">NADP</keyword>
<keyword id="KW-0560">Oxidoreductase</keyword>
<feature type="chain" id="PRO_0000448655" description="Short-chain dehydrogenase/reductase sthC">
    <location>
        <begin position="1"/>
        <end position="314"/>
    </location>
</feature>
<feature type="region of interest" description="Disordered" evidence="4">
    <location>
        <begin position="1"/>
        <end position="27"/>
    </location>
</feature>
<feature type="compositionally biased region" description="Polar residues" evidence="4">
    <location>
        <begin position="1"/>
        <end position="10"/>
    </location>
</feature>
<feature type="active site" description="Proton donor" evidence="2">
    <location>
        <position position="191"/>
    </location>
</feature>
<feature type="active site" description="Proton acceptor" evidence="3">
    <location>
        <position position="222"/>
    </location>
</feature>
<feature type="active site" description="Lowers pKa of active site Tyr" evidence="2">
    <location>
        <position position="226"/>
    </location>
</feature>
<feature type="binding site" evidence="1">
    <location>
        <position position="56"/>
    </location>
    <ligand>
        <name>NADP(+)</name>
        <dbReference type="ChEBI" id="CHEBI:58349"/>
    </ligand>
</feature>
<feature type="binding site" evidence="1">
    <location>
        <position position="80"/>
    </location>
    <ligand>
        <name>NADP(+)</name>
        <dbReference type="ChEBI" id="CHEBI:58349"/>
    </ligand>
</feature>
<feature type="binding site" evidence="1">
    <location>
        <position position="105"/>
    </location>
    <ligand>
        <name>NADP(+)</name>
        <dbReference type="ChEBI" id="CHEBI:58349"/>
    </ligand>
</feature>
<feature type="binding site" evidence="2">
    <location>
        <position position="132"/>
    </location>
    <ligand>
        <name>NADP(+)</name>
        <dbReference type="ChEBI" id="CHEBI:58349"/>
    </ligand>
</feature>
<feature type="binding site" evidence="1">
    <location>
        <position position="167"/>
    </location>
    <ligand>
        <name>NADP(+)</name>
        <dbReference type="ChEBI" id="CHEBI:58349"/>
    </ligand>
</feature>
<feature type="binding site" evidence="2">
    <location>
        <position position="222"/>
    </location>
    <ligand>
        <name>NADP(+)</name>
        <dbReference type="ChEBI" id="CHEBI:58349"/>
    </ligand>
</feature>
<feature type="binding site" evidence="2">
    <location>
        <position position="226"/>
    </location>
    <ligand>
        <name>NADP(+)</name>
        <dbReference type="ChEBI" id="CHEBI:58349"/>
    </ligand>
</feature>
<gene>
    <name evidence="6" type="primary">sthC</name>
    <name type="ORF">SNOG_07862</name>
</gene>
<evidence type="ECO:0000250" key="1">
    <source>
        <dbReference type="UniProtKB" id="L0E2Z4"/>
    </source>
</evidence>
<evidence type="ECO:0000250" key="2">
    <source>
        <dbReference type="UniProtKB" id="O93868"/>
    </source>
</evidence>
<evidence type="ECO:0000255" key="3">
    <source>
        <dbReference type="PROSITE-ProRule" id="PRU10001"/>
    </source>
</evidence>
<evidence type="ECO:0000256" key="4">
    <source>
        <dbReference type="SAM" id="MobiDB-lite"/>
    </source>
</evidence>
<evidence type="ECO:0000269" key="5">
    <source>
    </source>
</evidence>
<evidence type="ECO:0000303" key="6">
    <source>
    </source>
</evidence>
<evidence type="ECO:0000305" key="7"/>
<evidence type="ECO:0000305" key="8">
    <source>
    </source>
</evidence>